<proteinExistence type="inferred from homology"/>
<dbReference type="EMBL" id="CH477291">
    <property type="protein sequence ID" value="EAT44584.1"/>
    <property type="molecule type" value="Genomic_DNA"/>
</dbReference>
<dbReference type="RefSeq" id="XP_001648375.1">
    <property type="nucleotide sequence ID" value="XM_001648325.1"/>
</dbReference>
<dbReference type="SMR" id="Q17DT0"/>
<dbReference type="FunCoup" id="Q17DT0">
    <property type="interactions" value="2339"/>
</dbReference>
<dbReference type="STRING" id="7159.Q17DT0"/>
<dbReference type="PaxDb" id="7159-AAEL004076-PA"/>
<dbReference type="VEuPathDB" id="VectorBase:AAEL004076"/>
<dbReference type="eggNOG" id="KOG2336">
    <property type="taxonomic scope" value="Eukaryota"/>
</dbReference>
<dbReference type="HOGENOM" id="CLU_013325_0_1_1"/>
<dbReference type="InParanoid" id="Q17DT0"/>
<dbReference type="OMA" id="MNIVKDY"/>
<dbReference type="PhylomeDB" id="Q17DT0"/>
<dbReference type="Proteomes" id="UP000008820">
    <property type="component" value="Unassembled WGS sequence"/>
</dbReference>
<dbReference type="Proteomes" id="UP000682892">
    <property type="component" value="Unassembled WGS sequence"/>
</dbReference>
<dbReference type="GO" id="GO:0005829">
    <property type="term" value="C:cytosol"/>
    <property type="evidence" value="ECO:0007669"/>
    <property type="project" value="TreeGrafter"/>
</dbReference>
<dbReference type="GO" id="GO:0005524">
    <property type="term" value="F:ATP binding"/>
    <property type="evidence" value="ECO:0007669"/>
    <property type="project" value="UniProtKB-KW"/>
</dbReference>
<dbReference type="GO" id="GO:0046872">
    <property type="term" value="F:metal ion binding"/>
    <property type="evidence" value="ECO:0007669"/>
    <property type="project" value="UniProtKB-KW"/>
</dbReference>
<dbReference type="GO" id="GO:0071566">
    <property type="term" value="F:UFM1 activating enzyme activity"/>
    <property type="evidence" value="ECO:0007669"/>
    <property type="project" value="TreeGrafter"/>
</dbReference>
<dbReference type="GO" id="GO:0071569">
    <property type="term" value="P:protein ufmylation"/>
    <property type="evidence" value="ECO:0007669"/>
    <property type="project" value="TreeGrafter"/>
</dbReference>
<dbReference type="CDD" id="cd00757">
    <property type="entry name" value="ThiF_MoeB_HesA_family"/>
    <property type="match status" value="1"/>
</dbReference>
<dbReference type="FunFam" id="3.40.50.720:FF:000066">
    <property type="entry name" value="Putative ubiquitin-like modifier-activating enzyme 5"/>
    <property type="match status" value="1"/>
</dbReference>
<dbReference type="Gene3D" id="3.40.50.720">
    <property type="entry name" value="NAD(P)-binding Rossmann-like Domain"/>
    <property type="match status" value="1"/>
</dbReference>
<dbReference type="InterPro" id="IPR029752">
    <property type="entry name" value="D-isomer_DH_CS1"/>
</dbReference>
<dbReference type="InterPro" id="IPR045886">
    <property type="entry name" value="ThiF/MoeB/HesA"/>
</dbReference>
<dbReference type="InterPro" id="IPR000594">
    <property type="entry name" value="ThiF_NAD_FAD-bd"/>
</dbReference>
<dbReference type="InterPro" id="IPR035985">
    <property type="entry name" value="Ubiquitin-activating_enz"/>
</dbReference>
<dbReference type="PANTHER" id="PTHR10953">
    <property type="entry name" value="UBIQUITIN-ACTIVATING ENZYME E1"/>
    <property type="match status" value="1"/>
</dbReference>
<dbReference type="PANTHER" id="PTHR10953:SF9">
    <property type="entry name" value="UBIQUITIN-LIKE MODIFIER-ACTIVATING ENZYME 5"/>
    <property type="match status" value="1"/>
</dbReference>
<dbReference type="Pfam" id="PF00899">
    <property type="entry name" value="ThiF"/>
    <property type="match status" value="1"/>
</dbReference>
<dbReference type="SUPFAM" id="SSF69572">
    <property type="entry name" value="Activating enzymes of the ubiquitin-like proteins"/>
    <property type="match status" value="1"/>
</dbReference>
<keyword id="KW-0067">ATP-binding</keyword>
<keyword id="KW-0479">Metal-binding</keyword>
<keyword id="KW-0547">Nucleotide-binding</keyword>
<keyword id="KW-1185">Reference proteome</keyword>
<keyword id="KW-0833">Ubl conjugation pathway</keyword>
<keyword id="KW-0862">Zinc</keyword>
<organism>
    <name type="scientific">Aedes aegypti</name>
    <name type="common">Yellowfever mosquito</name>
    <name type="synonym">Culex aegypti</name>
    <dbReference type="NCBI Taxonomy" id="7159"/>
    <lineage>
        <taxon>Eukaryota</taxon>
        <taxon>Metazoa</taxon>
        <taxon>Ecdysozoa</taxon>
        <taxon>Arthropoda</taxon>
        <taxon>Hexapoda</taxon>
        <taxon>Insecta</taxon>
        <taxon>Pterygota</taxon>
        <taxon>Neoptera</taxon>
        <taxon>Endopterygota</taxon>
        <taxon>Diptera</taxon>
        <taxon>Nematocera</taxon>
        <taxon>Culicoidea</taxon>
        <taxon>Culicidae</taxon>
        <taxon>Culicinae</taxon>
        <taxon>Aedini</taxon>
        <taxon>Aedes</taxon>
        <taxon>Stegomyia</taxon>
    </lineage>
</organism>
<name>UBA5_AEDAE</name>
<protein>
    <recommendedName>
        <fullName>Ubiquitin-like modifier-activating enzyme 5</fullName>
        <shortName>Ubiquitin-activating enzyme 5</shortName>
    </recommendedName>
</protein>
<feature type="chain" id="PRO_0000391938" description="Ubiquitin-like modifier-activating enzyme 5">
    <location>
        <begin position="1"/>
        <end position="397"/>
    </location>
</feature>
<feature type="region of interest" description="Disordered" evidence="2">
    <location>
        <begin position="362"/>
        <end position="384"/>
    </location>
</feature>
<feature type="compositionally biased region" description="Low complexity" evidence="2">
    <location>
        <begin position="375"/>
        <end position="384"/>
    </location>
</feature>
<feature type="active site" description="Glycyl thioester intermediate" evidence="1">
    <location>
        <position position="243"/>
    </location>
</feature>
<feature type="binding site" evidence="1">
    <location>
        <position position="76"/>
    </location>
    <ligand>
        <name>ATP</name>
        <dbReference type="ChEBI" id="CHEBI:30616"/>
    </ligand>
</feature>
<feature type="binding site" evidence="1">
    <location>
        <position position="97"/>
    </location>
    <ligand>
        <name>ATP</name>
        <dbReference type="ChEBI" id="CHEBI:30616"/>
    </ligand>
</feature>
<feature type="binding site" evidence="1">
    <location>
        <position position="120"/>
    </location>
    <ligand>
        <name>ATP</name>
        <dbReference type="ChEBI" id="CHEBI:30616"/>
    </ligand>
</feature>
<feature type="binding site" evidence="1">
    <location>
        <position position="143"/>
    </location>
    <ligand>
        <name>ATP</name>
        <dbReference type="ChEBI" id="CHEBI:30616"/>
    </ligand>
</feature>
<feature type="binding site" evidence="1">
    <location>
        <position position="177"/>
    </location>
    <ligand>
        <name>ATP</name>
        <dbReference type="ChEBI" id="CHEBI:30616"/>
    </ligand>
</feature>
<feature type="binding site" evidence="1">
    <location>
        <position position="219"/>
    </location>
    <ligand>
        <name>Zn(2+)</name>
        <dbReference type="ChEBI" id="CHEBI:29105"/>
    </ligand>
</feature>
<feature type="binding site" evidence="1">
    <location>
        <position position="222"/>
    </location>
    <ligand>
        <name>Zn(2+)</name>
        <dbReference type="ChEBI" id="CHEBI:29105"/>
    </ligand>
</feature>
<feature type="binding site" evidence="1">
    <location>
        <position position="296"/>
    </location>
    <ligand>
        <name>Zn(2+)</name>
        <dbReference type="ChEBI" id="CHEBI:29105"/>
    </ligand>
</feature>
<feature type="binding site" evidence="1">
    <location>
        <position position="301"/>
    </location>
    <ligand>
        <name>Zn(2+)</name>
        <dbReference type="ChEBI" id="CHEBI:29105"/>
    </ligand>
</feature>
<evidence type="ECO:0000250" key="1"/>
<evidence type="ECO:0000256" key="2">
    <source>
        <dbReference type="SAM" id="MobiDB-lite"/>
    </source>
</evidence>
<evidence type="ECO:0000305" key="3"/>
<reference key="1">
    <citation type="journal article" date="2007" name="Science">
        <title>Genome sequence of Aedes aegypti, a major arbovirus vector.</title>
        <authorList>
            <person name="Nene V."/>
            <person name="Wortman J.R."/>
            <person name="Lawson D."/>
            <person name="Haas B.J."/>
            <person name="Kodira C.D."/>
            <person name="Tu Z.J."/>
            <person name="Loftus B.J."/>
            <person name="Xi Z."/>
            <person name="Megy K."/>
            <person name="Grabherr M."/>
            <person name="Ren Q."/>
            <person name="Zdobnov E.M."/>
            <person name="Lobo N.F."/>
            <person name="Campbell K.S."/>
            <person name="Brown S.E."/>
            <person name="Bonaldo M.F."/>
            <person name="Zhu J."/>
            <person name="Sinkins S.P."/>
            <person name="Hogenkamp D.G."/>
            <person name="Amedeo P."/>
            <person name="Arensburger P."/>
            <person name="Atkinson P.W."/>
            <person name="Bidwell S.L."/>
            <person name="Biedler J."/>
            <person name="Birney E."/>
            <person name="Bruggner R.V."/>
            <person name="Costas J."/>
            <person name="Coy M.R."/>
            <person name="Crabtree J."/>
            <person name="Crawford M."/>
            <person name="DeBruyn B."/>
            <person name="DeCaprio D."/>
            <person name="Eiglmeier K."/>
            <person name="Eisenstadt E."/>
            <person name="El-Dorry H."/>
            <person name="Gelbart W.M."/>
            <person name="Gomes S.L."/>
            <person name="Hammond M."/>
            <person name="Hannick L.I."/>
            <person name="Hogan J.R."/>
            <person name="Holmes M.H."/>
            <person name="Jaffe D."/>
            <person name="Johnston S.J."/>
            <person name="Kennedy R.C."/>
            <person name="Koo H."/>
            <person name="Kravitz S."/>
            <person name="Kriventseva E.V."/>
            <person name="Kulp D."/>
            <person name="Labutti K."/>
            <person name="Lee E."/>
            <person name="Li S."/>
            <person name="Lovin D.D."/>
            <person name="Mao C."/>
            <person name="Mauceli E."/>
            <person name="Menck C.F."/>
            <person name="Miller J.R."/>
            <person name="Montgomery P."/>
            <person name="Mori A."/>
            <person name="Nascimento A.L."/>
            <person name="Naveira H.F."/>
            <person name="Nusbaum C."/>
            <person name="O'Leary S.B."/>
            <person name="Orvis J."/>
            <person name="Pertea M."/>
            <person name="Quesneville H."/>
            <person name="Reidenbach K.R."/>
            <person name="Rogers Y.-H.C."/>
            <person name="Roth C.W."/>
            <person name="Schneider J.R."/>
            <person name="Schatz M."/>
            <person name="Shumway M."/>
            <person name="Stanke M."/>
            <person name="Stinson E.O."/>
            <person name="Tubio J.M.C."/>
            <person name="Vanzee J.P."/>
            <person name="Verjovski-Almeida S."/>
            <person name="Werner D."/>
            <person name="White O.R."/>
            <person name="Wyder S."/>
            <person name="Zeng Q."/>
            <person name="Zhao Q."/>
            <person name="Zhao Y."/>
            <person name="Hill C.A."/>
            <person name="Raikhel A.S."/>
            <person name="Soares M.B."/>
            <person name="Knudson D.L."/>
            <person name="Lee N.H."/>
            <person name="Galagan J."/>
            <person name="Salzberg S.L."/>
            <person name="Paulsen I.T."/>
            <person name="Dimopoulos G."/>
            <person name="Collins F.H."/>
            <person name="Bruce B."/>
            <person name="Fraser-Liggett C.M."/>
            <person name="Severson D.W."/>
        </authorList>
    </citation>
    <scope>NUCLEOTIDE SEQUENCE [LARGE SCALE GENOMIC DNA]</scope>
    <source>
        <strain>LVPib12</strain>
    </source>
</reference>
<comment type="function">
    <text evidence="1">E1-like enzyme which activates UFM1.</text>
</comment>
<comment type="similarity">
    <text evidence="3">Belongs to the ubiquitin-activating E1 family. UBA5 subfamily.</text>
</comment>
<gene>
    <name type="ORF">AAEL004076</name>
</gene>
<accession>Q17DT0</accession>
<sequence>MATMEELKLQIETLQSELCKLKATSAGGAREKIEKMSSEVVDSNPYSRLMALQRMGIVSEYERIRQKSVAVVGVGGVGSVTADMLTRCGIGKLILFDYDKVELANMNRLFFTPDQAGLSKVEAAAKTLNFINPDVKILTNNYNITTVESFDKFLNAIKTGGIEEGTPVDLVLSCVDNFEARMAINTACNELSLNWFESGVSENAVSGHIQFIRPGDTACFACAPPLVVAENIDEKTLKREGVCAASLPTTMGIVAGMLVQNTLKYLLNFGTVSDYLGYNALIDFFPKMSLKPNPTCDDRFCIDRQKDYAARPKEERVEEVPEEETPLHEENLYGIELVAEDDTQGSQPSTGTTHSISTGLKLAYEPPASTKHSETTSTTAVSDDVSLDELMAQMKSM</sequence>